<organism>
    <name type="scientific">Yersinia pestis bv. Antiqua (strain Antiqua)</name>
    <dbReference type="NCBI Taxonomy" id="360102"/>
    <lineage>
        <taxon>Bacteria</taxon>
        <taxon>Pseudomonadati</taxon>
        <taxon>Pseudomonadota</taxon>
        <taxon>Gammaproteobacteria</taxon>
        <taxon>Enterobacterales</taxon>
        <taxon>Yersiniaceae</taxon>
        <taxon>Yersinia</taxon>
    </lineage>
</organism>
<sequence>MITLRKLPIALAVAAGVLSTQAMAVDFHGYARSGIGWTASGGEQQCFQTTGAQSKYRLGNECETYAELKLGQELWKEGDKSFYLDTNVAYSVSQRDDWESTDPAFREANVQGKNLIESLPGSTIWAGKRFYQRHDVHMIDFYYWDISGPGAGLETIDLGFGKLSVAATRNSESGGSSAWIDNQRENAKYTINNVYDVRLAGLETNPGGSLELGVDYGRADTQEGYSLAPNASKDGVMLTAEHTQSLMGGFNKFVVQYATDSMTSYNTGHSQGTSVNNNGHLLRVIDHGAINLAEKWDMMYVALYQDIDLDNNNGNTWYSVGVRPMYKWTPIMSTLLEAGYDNVKSQHTGERNGQYKLTLAQQWQAGDSIWSRPAIRVFATYANWDEKWGYSDTTGVAQDGTIGTNSRGKNNEVTFGAQFEAWW</sequence>
<dbReference type="EMBL" id="CP000308">
    <property type="protein sequence ID" value="ABG12002.1"/>
    <property type="molecule type" value="Genomic_DNA"/>
</dbReference>
<dbReference type="RefSeq" id="WP_002212092.1">
    <property type="nucleotide sequence ID" value="NZ_CP009906.1"/>
</dbReference>
<dbReference type="SMR" id="Q1CC20"/>
<dbReference type="KEGG" id="ypa:YPA_0033"/>
<dbReference type="Proteomes" id="UP000001971">
    <property type="component" value="Chromosome"/>
</dbReference>
<dbReference type="GO" id="GO:0009279">
    <property type="term" value="C:cell outer membrane"/>
    <property type="evidence" value="ECO:0007669"/>
    <property type="project" value="UniProtKB-SubCell"/>
</dbReference>
<dbReference type="GO" id="GO:0046930">
    <property type="term" value="C:pore complex"/>
    <property type="evidence" value="ECO:0007669"/>
    <property type="project" value="UniProtKB-KW"/>
</dbReference>
<dbReference type="GO" id="GO:0042958">
    <property type="term" value="F:maltodextrin transmembrane transporter activity"/>
    <property type="evidence" value="ECO:0007669"/>
    <property type="project" value="InterPro"/>
</dbReference>
<dbReference type="GO" id="GO:0015481">
    <property type="term" value="F:maltose transporting porin activity"/>
    <property type="evidence" value="ECO:0007669"/>
    <property type="project" value="InterPro"/>
</dbReference>
<dbReference type="GO" id="GO:0006811">
    <property type="term" value="P:monoatomic ion transport"/>
    <property type="evidence" value="ECO:0007669"/>
    <property type="project" value="UniProtKB-KW"/>
</dbReference>
<dbReference type="CDD" id="cd01346">
    <property type="entry name" value="Maltoporin-like"/>
    <property type="match status" value="1"/>
</dbReference>
<dbReference type="FunFam" id="2.40.170.10:FF:000001">
    <property type="entry name" value="Maltoporin"/>
    <property type="match status" value="1"/>
</dbReference>
<dbReference type="Gene3D" id="2.40.170.10">
    <property type="entry name" value="Porin, LamB type"/>
    <property type="match status" value="1"/>
</dbReference>
<dbReference type="HAMAP" id="MF_01301">
    <property type="entry name" value="LamB"/>
    <property type="match status" value="1"/>
</dbReference>
<dbReference type="InterPro" id="IPR050286">
    <property type="entry name" value="G_neg_Bact_CarbUptk_Porin"/>
</dbReference>
<dbReference type="InterPro" id="IPR023738">
    <property type="entry name" value="Maltoporin"/>
</dbReference>
<dbReference type="InterPro" id="IPR003192">
    <property type="entry name" value="Porin_LamB"/>
</dbReference>
<dbReference type="InterPro" id="IPR036998">
    <property type="entry name" value="Porin_LamB_sf"/>
</dbReference>
<dbReference type="NCBIfam" id="NF006860">
    <property type="entry name" value="PRK09360.1"/>
    <property type="match status" value="1"/>
</dbReference>
<dbReference type="PANTHER" id="PTHR38762">
    <property type="entry name" value="CRYPTIC OUTER MEMBRANE PORIN BGLH-RELATED"/>
    <property type="match status" value="1"/>
</dbReference>
<dbReference type="PANTHER" id="PTHR38762:SF1">
    <property type="entry name" value="CRYPTIC OUTER MEMBRANE PORIN BGLH-RELATED"/>
    <property type="match status" value="1"/>
</dbReference>
<dbReference type="Pfam" id="PF02264">
    <property type="entry name" value="LamB"/>
    <property type="match status" value="1"/>
</dbReference>
<dbReference type="SUPFAM" id="SSF56935">
    <property type="entry name" value="Porins"/>
    <property type="match status" value="1"/>
</dbReference>
<gene>
    <name evidence="1" type="primary">lamB1</name>
    <name type="ordered locus">YPA_0033</name>
</gene>
<protein>
    <recommendedName>
        <fullName evidence="1">Maltoporin 1</fullName>
    </recommendedName>
    <alternativeName>
        <fullName evidence="1">Maltose-inducible porin 1</fullName>
    </alternativeName>
</protein>
<proteinExistence type="inferred from homology"/>
<name>LAMB1_YERPA</name>
<comment type="function">
    <text evidence="1">Involved in the transport of maltose and maltodextrins.</text>
</comment>
<comment type="catalytic activity">
    <reaction evidence="1">
        <text>beta-maltose(in) = beta-maltose(out)</text>
        <dbReference type="Rhea" id="RHEA:29731"/>
        <dbReference type="ChEBI" id="CHEBI:18147"/>
    </reaction>
</comment>
<comment type="subunit">
    <text evidence="1">Homotrimer formed of three 18-stranded antiparallel beta-barrels, containing three independent channels.</text>
</comment>
<comment type="subcellular location">
    <subcellularLocation>
        <location evidence="1">Cell outer membrane</location>
        <topology evidence="1">Multi-pass membrane protein</topology>
    </subcellularLocation>
</comment>
<comment type="induction">
    <text evidence="1">By maltose.</text>
</comment>
<comment type="similarity">
    <text evidence="1">Belongs to the porin LamB (TC 1.B.3) family.</text>
</comment>
<reference key="1">
    <citation type="journal article" date="2006" name="J. Bacteriol.">
        <title>Complete genome sequence of Yersinia pestis strains Antiqua and Nepal516: evidence of gene reduction in an emerging pathogen.</title>
        <authorList>
            <person name="Chain P.S.G."/>
            <person name="Hu P."/>
            <person name="Malfatti S.A."/>
            <person name="Radnedge L."/>
            <person name="Larimer F."/>
            <person name="Vergez L.M."/>
            <person name="Worsham P."/>
            <person name="Chu M.C."/>
            <person name="Andersen G.L."/>
        </authorList>
    </citation>
    <scope>NUCLEOTIDE SEQUENCE [LARGE SCALE GENOMIC DNA]</scope>
    <source>
        <strain>Antiqua</strain>
    </source>
</reference>
<keyword id="KW-0998">Cell outer membrane</keyword>
<keyword id="KW-0406">Ion transport</keyword>
<keyword id="KW-0472">Membrane</keyword>
<keyword id="KW-0626">Porin</keyword>
<keyword id="KW-0732">Signal</keyword>
<keyword id="KW-0762">Sugar transport</keyword>
<keyword id="KW-0812">Transmembrane</keyword>
<keyword id="KW-1134">Transmembrane beta strand</keyword>
<keyword id="KW-0813">Transport</keyword>
<feature type="signal peptide" evidence="1">
    <location>
        <begin position="1"/>
        <end position="24"/>
    </location>
</feature>
<feature type="chain" id="PRO_5000115704" description="Maltoporin 1">
    <location>
        <begin position="25"/>
        <end position="423"/>
    </location>
</feature>
<feature type="site" description="Greasy slide, important in sugar transport" evidence="1">
    <location>
        <position position="30"/>
    </location>
</feature>
<feature type="site" description="Greasy slide, important in sugar transport" evidence="1">
    <location>
        <position position="65"/>
    </location>
</feature>
<feature type="site" description="Greasy slide, important in sugar transport" evidence="1">
    <location>
        <position position="98"/>
    </location>
</feature>
<feature type="site" description="Important in sugar transport" evidence="1">
    <location>
        <position position="142"/>
    </location>
</feature>
<feature type="site" description="Greasy slide, important in sugar transport" evidence="1">
    <location>
        <position position="250"/>
    </location>
</feature>
<feature type="site" description="Greasy slide, important in sugar transport" evidence="1">
    <location>
        <position position="370"/>
    </location>
</feature>
<feature type="site" description="Greasy slide, important in sugar transport" evidence="1">
    <location>
        <position position="422"/>
    </location>
</feature>
<evidence type="ECO:0000255" key="1">
    <source>
        <dbReference type="HAMAP-Rule" id="MF_01301"/>
    </source>
</evidence>
<accession>Q1CC20</accession>